<protein>
    <recommendedName>
        <fullName evidence="1">Aminomethyltransferase</fullName>
        <ecNumber evidence="1">2.1.2.10</ecNumber>
    </recommendedName>
    <alternativeName>
        <fullName evidence="1">Glycine cleavage system T protein</fullName>
    </alternativeName>
</protein>
<proteinExistence type="inferred from homology"/>
<dbReference type="EC" id="2.1.2.10" evidence="1"/>
<dbReference type="EMBL" id="CU928162">
    <property type="protein sequence ID" value="CAR09374.1"/>
    <property type="molecule type" value="Genomic_DNA"/>
</dbReference>
<dbReference type="RefSeq" id="WP_000068716.1">
    <property type="nucleotide sequence ID" value="NC_011745.1"/>
</dbReference>
<dbReference type="SMR" id="B7MZ57"/>
<dbReference type="KEGG" id="ecq:ECED1_3363"/>
<dbReference type="HOGENOM" id="CLU_007884_10_2_6"/>
<dbReference type="Proteomes" id="UP000000748">
    <property type="component" value="Chromosome"/>
</dbReference>
<dbReference type="GO" id="GO:0005829">
    <property type="term" value="C:cytosol"/>
    <property type="evidence" value="ECO:0007669"/>
    <property type="project" value="TreeGrafter"/>
</dbReference>
<dbReference type="GO" id="GO:0005960">
    <property type="term" value="C:glycine cleavage complex"/>
    <property type="evidence" value="ECO:0007669"/>
    <property type="project" value="InterPro"/>
</dbReference>
<dbReference type="GO" id="GO:0004047">
    <property type="term" value="F:aminomethyltransferase activity"/>
    <property type="evidence" value="ECO:0007669"/>
    <property type="project" value="UniProtKB-UniRule"/>
</dbReference>
<dbReference type="GO" id="GO:0008483">
    <property type="term" value="F:transaminase activity"/>
    <property type="evidence" value="ECO:0007669"/>
    <property type="project" value="UniProtKB-KW"/>
</dbReference>
<dbReference type="GO" id="GO:0019464">
    <property type="term" value="P:glycine decarboxylation via glycine cleavage system"/>
    <property type="evidence" value="ECO:0007669"/>
    <property type="project" value="UniProtKB-UniRule"/>
</dbReference>
<dbReference type="FunFam" id="2.40.30.110:FF:000001">
    <property type="entry name" value="Aminomethyltransferase"/>
    <property type="match status" value="1"/>
</dbReference>
<dbReference type="FunFam" id="3.30.70.1400:FF:000001">
    <property type="entry name" value="Aminomethyltransferase"/>
    <property type="match status" value="1"/>
</dbReference>
<dbReference type="FunFam" id="4.10.1250.10:FF:000001">
    <property type="entry name" value="Aminomethyltransferase"/>
    <property type="match status" value="1"/>
</dbReference>
<dbReference type="Gene3D" id="2.40.30.110">
    <property type="entry name" value="Aminomethyltransferase beta-barrel domains"/>
    <property type="match status" value="1"/>
</dbReference>
<dbReference type="Gene3D" id="3.30.70.1400">
    <property type="entry name" value="Aminomethyltransferase beta-barrel domains"/>
    <property type="match status" value="1"/>
</dbReference>
<dbReference type="Gene3D" id="4.10.1250.10">
    <property type="entry name" value="Aminomethyltransferase fragment"/>
    <property type="match status" value="1"/>
</dbReference>
<dbReference type="Gene3D" id="3.30.1360.120">
    <property type="entry name" value="Probable tRNA modification gtpase trme, domain 1"/>
    <property type="match status" value="1"/>
</dbReference>
<dbReference type="HAMAP" id="MF_00259">
    <property type="entry name" value="GcvT"/>
    <property type="match status" value="1"/>
</dbReference>
<dbReference type="InterPro" id="IPR006223">
    <property type="entry name" value="GCS_T"/>
</dbReference>
<dbReference type="InterPro" id="IPR022903">
    <property type="entry name" value="GCS_T_bac"/>
</dbReference>
<dbReference type="InterPro" id="IPR013977">
    <property type="entry name" value="GCST_C"/>
</dbReference>
<dbReference type="InterPro" id="IPR006222">
    <property type="entry name" value="GCV_T_N"/>
</dbReference>
<dbReference type="InterPro" id="IPR028896">
    <property type="entry name" value="GcvT/YgfZ/DmdA"/>
</dbReference>
<dbReference type="InterPro" id="IPR029043">
    <property type="entry name" value="GcvT/YgfZ_C"/>
</dbReference>
<dbReference type="InterPro" id="IPR027266">
    <property type="entry name" value="TrmE/GcvT_dom1"/>
</dbReference>
<dbReference type="NCBIfam" id="TIGR00528">
    <property type="entry name" value="gcvT"/>
    <property type="match status" value="1"/>
</dbReference>
<dbReference type="NCBIfam" id="NF001567">
    <property type="entry name" value="PRK00389.1"/>
    <property type="match status" value="1"/>
</dbReference>
<dbReference type="PANTHER" id="PTHR43757">
    <property type="entry name" value="AMINOMETHYLTRANSFERASE"/>
    <property type="match status" value="1"/>
</dbReference>
<dbReference type="PANTHER" id="PTHR43757:SF2">
    <property type="entry name" value="AMINOMETHYLTRANSFERASE, MITOCHONDRIAL"/>
    <property type="match status" value="1"/>
</dbReference>
<dbReference type="Pfam" id="PF01571">
    <property type="entry name" value="GCV_T"/>
    <property type="match status" value="1"/>
</dbReference>
<dbReference type="Pfam" id="PF08669">
    <property type="entry name" value="GCV_T_C"/>
    <property type="match status" value="1"/>
</dbReference>
<dbReference type="PIRSF" id="PIRSF006487">
    <property type="entry name" value="GcvT"/>
    <property type="match status" value="1"/>
</dbReference>
<dbReference type="SUPFAM" id="SSF101790">
    <property type="entry name" value="Aminomethyltransferase beta-barrel domain"/>
    <property type="match status" value="1"/>
</dbReference>
<dbReference type="SUPFAM" id="SSF103025">
    <property type="entry name" value="Folate-binding domain"/>
    <property type="match status" value="1"/>
</dbReference>
<keyword id="KW-0032">Aminotransferase</keyword>
<keyword id="KW-0808">Transferase</keyword>
<organism>
    <name type="scientific">Escherichia coli O81 (strain ED1a)</name>
    <dbReference type="NCBI Taxonomy" id="585397"/>
    <lineage>
        <taxon>Bacteria</taxon>
        <taxon>Pseudomonadati</taxon>
        <taxon>Pseudomonadota</taxon>
        <taxon>Gammaproteobacteria</taxon>
        <taxon>Enterobacterales</taxon>
        <taxon>Enterobacteriaceae</taxon>
        <taxon>Escherichia</taxon>
    </lineage>
</organism>
<accession>B7MZ57</accession>
<name>GCST_ECO81</name>
<sequence>MAQQTPLYEQHTLCGARMVDFHGWMMPLHYGSQIDEHHAVRTDAGMFDVSHMTIVDLRGSRTREFLRYLLANDVAKLTKSGKALYSGMLNASGGVIDDLIVYYFTEDFFRLVVNSATREKDLSWITQHAEPFGIEITVRDDLSMIAVQGPNAQAKAATLFNDAQRQAVEGMKPFFGVQAGDLFIATTGYTGEVGYEIALPNEKAADFWRALVEAGVKPCGLGARDTLRLEAGMNLYSQEMDETISPLAANMGWTIAWEPADRDFIGREALEAQREHGTEKLVGLVMTEKGVLRNELPVRFTDAQGNQHEGIITSGTFSPTLGYSIALARVPEGIGETAIVQIRNREMPVKVTKPVFVRNGKAVA</sequence>
<reference key="1">
    <citation type="journal article" date="2009" name="PLoS Genet.">
        <title>Organised genome dynamics in the Escherichia coli species results in highly diverse adaptive paths.</title>
        <authorList>
            <person name="Touchon M."/>
            <person name="Hoede C."/>
            <person name="Tenaillon O."/>
            <person name="Barbe V."/>
            <person name="Baeriswyl S."/>
            <person name="Bidet P."/>
            <person name="Bingen E."/>
            <person name="Bonacorsi S."/>
            <person name="Bouchier C."/>
            <person name="Bouvet O."/>
            <person name="Calteau A."/>
            <person name="Chiapello H."/>
            <person name="Clermont O."/>
            <person name="Cruveiller S."/>
            <person name="Danchin A."/>
            <person name="Diard M."/>
            <person name="Dossat C."/>
            <person name="Karoui M.E."/>
            <person name="Frapy E."/>
            <person name="Garry L."/>
            <person name="Ghigo J.M."/>
            <person name="Gilles A.M."/>
            <person name="Johnson J."/>
            <person name="Le Bouguenec C."/>
            <person name="Lescat M."/>
            <person name="Mangenot S."/>
            <person name="Martinez-Jehanne V."/>
            <person name="Matic I."/>
            <person name="Nassif X."/>
            <person name="Oztas S."/>
            <person name="Petit M.A."/>
            <person name="Pichon C."/>
            <person name="Rouy Z."/>
            <person name="Ruf C.S."/>
            <person name="Schneider D."/>
            <person name="Tourret J."/>
            <person name="Vacherie B."/>
            <person name="Vallenet D."/>
            <person name="Medigue C."/>
            <person name="Rocha E.P.C."/>
            <person name="Denamur E."/>
        </authorList>
    </citation>
    <scope>NUCLEOTIDE SEQUENCE [LARGE SCALE GENOMIC DNA]</scope>
    <source>
        <strain>ED1a</strain>
    </source>
</reference>
<evidence type="ECO:0000255" key="1">
    <source>
        <dbReference type="HAMAP-Rule" id="MF_00259"/>
    </source>
</evidence>
<comment type="function">
    <text evidence="1">The glycine cleavage system catalyzes the degradation of glycine.</text>
</comment>
<comment type="catalytic activity">
    <reaction evidence="1">
        <text>N(6)-[(R)-S(8)-aminomethyldihydrolipoyl]-L-lysyl-[protein] + (6S)-5,6,7,8-tetrahydrofolate = N(6)-[(R)-dihydrolipoyl]-L-lysyl-[protein] + (6R)-5,10-methylene-5,6,7,8-tetrahydrofolate + NH4(+)</text>
        <dbReference type="Rhea" id="RHEA:16945"/>
        <dbReference type="Rhea" id="RHEA-COMP:10475"/>
        <dbReference type="Rhea" id="RHEA-COMP:10492"/>
        <dbReference type="ChEBI" id="CHEBI:15636"/>
        <dbReference type="ChEBI" id="CHEBI:28938"/>
        <dbReference type="ChEBI" id="CHEBI:57453"/>
        <dbReference type="ChEBI" id="CHEBI:83100"/>
        <dbReference type="ChEBI" id="CHEBI:83143"/>
        <dbReference type="EC" id="2.1.2.10"/>
    </reaction>
</comment>
<comment type="subunit">
    <text evidence="1">The glycine cleavage system is composed of four proteins: P, T, L and H.</text>
</comment>
<comment type="similarity">
    <text evidence="1">Belongs to the GcvT family.</text>
</comment>
<feature type="chain" id="PRO_1000125639" description="Aminomethyltransferase">
    <location>
        <begin position="1"/>
        <end position="364"/>
    </location>
</feature>
<gene>
    <name evidence="1" type="primary">gcvT</name>
    <name type="ordered locus">ECED1_3363</name>
</gene>